<evidence type="ECO:0000250" key="1"/>
<evidence type="ECO:0000250" key="2">
    <source>
        <dbReference type="UniProtKB" id="P68266"/>
    </source>
</evidence>
<evidence type="ECO:0000250" key="3">
    <source>
        <dbReference type="UniProtKB" id="Q9NZD2"/>
    </source>
</evidence>
<evidence type="ECO:0000305" key="4"/>
<feature type="initiator methionine" description="Removed" evidence="2">
    <location>
        <position position="1"/>
    </location>
</feature>
<feature type="chain" id="PRO_0000148916" description="Glycolipid transfer protein">
    <location>
        <begin position="2"/>
        <end position="209"/>
    </location>
</feature>
<feature type="repeat" description="1">
    <location>
        <begin position="45"/>
        <end position="55"/>
    </location>
</feature>
<feature type="repeat" description="2">
    <location>
        <begin position="56"/>
        <end position="66"/>
    </location>
</feature>
<feature type="region of interest" description="2 X 12 AA approximate tandem repeats">
    <location>
        <begin position="45"/>
        <end position="66"/>
    </location>
</feature>
<feature type="binding site" evidence="3">
    <location>
        <begin position="48"/>
        <end position="55"/>
    </location>
    <ligand>
        <name>beta-D-galactosyl-(1-&gt;4)-beta-D-glucosyl-(1&lt;-&gt;1)-N-[(9Z)-octadecenoyl]-sphing-4-enine</name>
        <dbReference type="ChEBI" id="CHEBI:131557"/>
    </ligand>
</feature>
<feature type="binding site" evidence="3">
    <location>
        <position position="140"/>
    </location>
    <ligand>
        <name>beta-D-galactosyl-(1-&gt;4)-beta-D-glucosyl-(1&lt;-&gt;1)-N-[(9Z)-octadecenoyl]-sphing-4-enine</name>
        <dbReference type="ChEBI" id="CHEBI:131557"/>
    </ligand>
</feature>
<feature type="binding site" evidence="3">
    <location>
        <position position="207"/>
    </location>
    <ligand>
        <name>beta-D-galactosyl-(1-&gt;4)-beta-D-glucosyl-(1&lt;-&gt;1)-N-[(9Z)-octadecenoyl]-sphing-4-enine</name>
        <dbReference type="ChEBI" id="CHEBI:131557"/>
    </ligand>
</feature>
<feature type="modified residue" description="N-acetylalanine" evidence="2">
    <location>
        <position position="2"/>
    </location>
</feature>
<feature type="sequence conflict" description="In Ref. 1; AAF33209." evidence="4" ref="1">
    <original>LDYT</original>
    <variation>INYK</variation>
    <location>
        <begin position="205"/>
        <end position="208"/>
    </location>
</feature>
<protein>
    <recommendedName>
        <fullName>Glycolipid transfer protein</fullName>
        <shortName>GLTP</shortName>
    </recommendedName>
</protein>
<gene>
    <name type="primary">Gltp</name>
</gene>
<name>GLTP_MOUSE</name>
<sequence length="209" mass="23690">MALLAEHLLKPLPADRQIETGPFLEAVAHLPPFFDCLGSPVFTPIKADISGNITKIKAVYDTDPAKFKTLQNILEVEKGMYGAEWPKVGATLALLWLKRGLRFIQVFLQSICDGERDENHPNLIRVNANKAYEMALKKYHGWLVQKIFKAALYAAPYKSDFLKALSKGQNVTEEECLEKIRLFLVNYTATIDAIYDMYTKMNAELDYTV</sequence>
<dbReference type="EMBL" id="AF209703">
    <property type="protein sequence ID" value="AAF33209.1"/>
    <property type="molecule type" value="mRNA"/>
</dbReference>
<dbReference type="EMBL" id="BC016584">
    <property type="protein sequence ID" value="AAH16584.1"/>
    <property type="molecule type" value="mRNA"/>
</dbReference>
<dbReference type="EMBL" id="AK003218">
    <property type="protein sequence ID" value="BAB22649.1"/>
    <property type="molecule type" value="mRNA"/>
</dbReference>
<dbReference type="CCDS" id="CCDS19569.1"/>
<dbReference type="RefSeq" id="NP_062795.2">
    <property type="nucleotide sequence ID" value="NM_019821.2"/>
</dbReference>
<dbReference type="SMR" id="Q9JL62"/>
<dbReference type="BioGRID" id="207920">
    <property type="interactions" value="2"/>
</dbReference>
<dbReference type="FunCoup" id="Q9JL62">
    <property type="interactions" value="1383"/>
</dbReference>
<dbReference type="IntAct" id="Q9JL62">
    <property type="interactions" value="2"/>
</dbReference>
<dbReference type="MINT" id="Q9JL62"/>
<dbReference type="STRING" id="10090.ENSMUSP00000012028"/>
<dbReference type="GlyGen" id="Q9JL62">
    <property type="glycosylation" value="2 sites, 1 N-linked glycan (1 site), 1 O-linked glycan (1 site)"/>
</dbReference>
<dbReference type="iPTMnet" id="Q9JL62"/>
<dbReference type="PhosphoSitePlus" id="Q9JL62"/>
<dbReference type="jPOST" id="Q9JL62"/>
<dbReference type="PaxDb" id="10090-ENSMUSP00000012028"/>
<dbReference type="ProteomicsDB" id="271000"/>
<dbReference type="Pumba" id="Q9JL62"/>
<dbReference type="Antibodypedia" id="30918">
    <property type="antibodies" value="110 antibodies from 19 providers"/>
</dbReference>
<dbReference type="DNASU" id="56356"/>
<dbReference type="Ensembl" id="ENSMUST00000012028.14">
    <property type="protein sequence ID" value="ENSMUSP00000012028.8"/>
    <property type="gene ID" value="ENSMUSG00000011884.14"/>
</dbReference>
<dbReference type="GeneID" id="56356"/>
<dbReference type="KEGG" id="mmu:56356"/>
<dbReference type="UCSC" id="uc008yzw.2">
    <property type="organism name" value="mouse"/>
</dbReference>
<dbReference type="AGR" id="MGI:1929253"/>
<dbReference type="CTD" id="51228"/>
<dbReference type="MGI" id="MGI:1929253">
    <property type="gene designation" value="Gltp"/>
</dbReference>
<dbReference type="VEuPathDB" id="HostDB:ENSMUSG00000011884"/>
<dbReference type="eggNOG" id="KOG3221">
    <property type="taxonomic scope" value="Eukaryota"/>
</dbReference>
<dbReference type="GeneTree" id="ENSGT00940000155182"/>
<dbReference type="HOGENOM" id="CLU_079400_2_1_1"/>
<dbReference type="InParanoid" id="Q9JL62"/>
<dbReference type="OMA" id="EMHGAEW"/>
<dbReference type="OrthoDB" id="205255at2759"/>
<dbReference type="PhylomeDB" id="Q9JL62"/>
<dbReference type="TreeFam" id="TF317467"/>
<dbReference type="Reactome" id="R-MMU-9845576">
    <property type="pathway name" value="Glycosphingolipid transport"/>
</dbReference>
<dbReference type="BioGRID-ORCS" id="56356">
    <property type="hits" value="2 hits in 80 CRISPR screens"/>
</dbReference>
<dbReference type="ChiTaRS" id="Gltp">
    <property type="organism name" value="mouse"/>
</dbReference>
<dbReference type="PRO" id="PR:Q9JL62"/>
<dbReference type="Proteomes" id="UP000000589">
    <property type="component" value="Chromosome 5"/>
</dbReference>
<dbReference type="RNAct" id="Q9JL62">
    <property type="molecule type" value="protein"/>
</dbReference>
<dbReference type="Bgee" id="ENSMUSG00000011884">
    <property type="expression patterns" value="Expressed in tail skin and 271 other cell types or tissues"/>
</dbReference>
<dbReference type="ExpressionAtlas" id="Q9JL62">
    <property type="expression patterns" value="baseline and differential"/>
</dbReference>
<dbReference type="GO" id="GO:0005829">
    <property type="term" value="C:cytosol"/>
    <property type="evidence" value="ECO:0007669"/>
    <property type="project" value="Ensembl"/>
</dbReference>
<dbReference type="GO" id="GO:0051861">
    <property type="term" value="F:glycolipid binding"/>
    <property type="evidence" value="ECO:0000250"/>
    <property type="project" value="HGNC-UCL"/>
</dbReference>
<dbReference type="GO" id="GO:0042802">
    <property type="term" value="F:identical protein binding"/>
    <property type="evidence" value="ECO:0007669"/>
    <property type="project" value="Ensembl"/>
</dbReference>
<dbReference type="GO" id="GO:0008289">
    <property type="term" value="F:lipid binding"/>
    <property type="evidence" value="ECO:0000250"/>
    <property type="project" value="HGNC-UCL"/>
</dbReference>
<dbReference type="GO" id="GO:0120013">
    <property type="term" value="F:lipid transfer activity"/>
    <property type="evidence" value="ECO:0000250"/>
    <property type="project" value="HGNC"/>
</dbReference>
<dbReference type="GO" id="GO:0120009">
    <property type="term" value="P:intermembrane lipid transfer"/>
    <property type="evidence" value="ECO:0000250"/>
    <property type="project" value="HGNC"/>
</dbReference>
<dbReference type="GO" id="GO:0035902">
    <property type="term" value="P:response to immobilization stress"/>
    <property type="evidence" value="ECO:0007669"/>
    <property type="project" value="Ensembl"/>
</dbReference>
<dbReference type="FunFam" id="1.10.3520.10:FF:000003">
    <property type="entry name" value="glycolipid transfer protein"/>
    <property type="match status" value="1"/>
</dbReference>
<dbReference type="Gene3D" id="1.10.3520.10">
    <property type="entry name" value="Glycolipid transfer protein"/>
    <property type="match status" value="1"/>
</dbReference>
<dbReference type="InterPro" id="IPR036497">
    <property type="entry name" value="GLTP_sf"/>
</dbReference>
<dbReference type="InterPro" id="IPR014830">
    <property type="entry name" value="Glycolipid_transfer_prot_dom"/>
</dbReference>
<dbReference type="PANTHER" id="PTHR10219:SF97">
    <property type="entry name" value="GLYCOLIPID TRANSFER PROTEIN"/>
    <property type="match status" value="1"/>
</dbReference>
<dbReference type="PANTHER" id="PTHR10219">
    <property type="entry name" value="GLYCOLIPID TRANSFER PROTEIN-RELATED"/>
    <property type="match status" value="1"/>
</dbReference>
<dbReference type="Pfam" id="PF08718">
    <property type="entry name" value="GLTP"/>
    <property type="match status" value="1"/>
</dbReference>
<dbReference type="SUPFAM" id="SSF110004">
    <property type="entry name" value="Glycolipid transfer protein, GLTP"/>
    <property type="match status" value="1"/>
</dbReference>
<reference key="1">
    <citation type="submission" date="1999-11" db="EMBL/GenBank/DDBJ databases">
        <title>Cloning of mouse glycolipid transfer protein cDNA.</title>
        <authorList>
            <person name="Lin X."/>
            <person name="Mattjus P."/>
            <person name="Pike H.M."/>
            <person name="Windebank A.J."/>
            <person name="Brown R.E."/>
        </authorList>
    </citation>
    <scope>NUCLEOTIDE SEQUENCE [MRNA]</scope>
    <source>
        <tissue>Epidermis</tissue>
    </source>
</reference>
<reference key="2">
    <citation type="journal article" date="2004" name="Genome Res.">
        <title>The status, quality, and expansion of the NIH full-length cDNA project: the Mammalian Gene Collection (MGC).</title>
        <authorList>
            <consortium name="The MGC Project Team"/>
        </authorList>
    </citation>
    <scope>NUCLEOTIDE SEQUENCE [LARGE SCALE MRNA]</scope>
</reference>
<reference key="3">
    <citation type="journal article" date="2005" name="Science">
        <title>The transcriptional landscape of the mammalian genome.</title>
        <authorList>
            <person name="Carninci P."/>
            <person name="Kasukawa T."/>
            <person name="Katayama S."/>
            <person name="Gough J."/>
            <person name="Frith M.C."/>
            <person name="Maeda N."/>
            <person name="Oyama R."/>
            <person name="Ravasi T."/>
            <person name="Lenhard B."/>
            <person name="Wells C."/>
            <person name="Kodzius R."/>
            <person name="Shimokawa K."/>
            <person name="Bajic V.B."/>
            <person name="Brenner S.E."/>
            <person name="Batalov S."/>
            <person name="Forrest A.R."/>
            <person name="Zavolan M."/>
            <person name="Davis M.J."/>
            <person name="Wilming L.G."/>
            <person name="Aidinis V."/>
            <person name="Allen J.E."/>
            <person name="Ambesi-Impiombato A."/>
            <person name="Apweiler R."/>
            <person name="Aturaliya R.N."/>
            <person name="Bailey T.L."/>
            <person name="Bansal M."/>
            <person name="Baxter L."/>
            <person name="Beisel K.W."/>
            <person name="Bersano T."/>
            <person name="Bono H."/>
            <person name="Chalk A.M."/>
            <person name="Chiu K.P."/>
            <person name="Choudhary V."/>
            <person name="Christoffels A."/>
            <person name="Clutterbuck D.R."/>
            <person name="Crowe M.L."/>
            <person name="Dalla E."/>
            <person name="Dalrymple B.P."/>
            <person name="de Bono B."/>
            <person name="Della Gatta G."/>
            <person name="di Bernardo D."/>
            <person name="Down T."/>
            <person name="Engstrom P."/>
            <person name="Fagiolini M."/>
            <person name="Faulkner G."/>
            <person name="Fletcher C.F."/>
            <person name="Fukushima T."/>
            <person name="Furuno M."/>
            <person name="Futaki S."/>
            <person name="Gariboldi M."/>
            <person name="Georgii-Hemming P."/>
            <person name="Gingeras T.R."/>
            <person name="Gojobori T."/>
            <person name="Green R.E."/>
            <person name="Gustincich S."/>
            <person name="Harbers M."/>
            <person name="Hayashi Y."/>
            <person name="Hensch T.K."/>
            <person name="Hirokawa N."/>
            <person name="Hill D."/>
            <person name="Huminiecki L."/>
            <person name="Iacono M."/>
            <person name="Ikeo K."/>
            <person name="Iwama A."/>
            <person name="Ishikawa T."/>
            <person name="Jakt M."/>
            <person name="Kanapin A."/>
            <person name="Katoh M."/>
            <person name="Kawasawa Y."/>
            <person name="Kelso J."/>
            <person name="Kitamura H."/>
            <person name="Kitano H."/>
            <person name="Kollias G."/>
            <person name="Krishnan S.P."/>
            <person name="Kruger A."/>
            <person name="Kummerfeld S.K."/>
            <person name="Kurochkin I.V."/>
            <person name="Lareau L.F."/>
            <person name="Lazarevic D."/>
            <person name="Lipovich L."/>
            <person name="Liu J."/>
            <person name="Liuni S."/>
            <person name="McWilliam S."/>
            <person name="Madan Babu M."/>
            <person name="Madera M."/>
            <person name="Marchionni L."/>
            <person name="Matsuda H."/>
            <person name="Matsuzawa S."/>
            <person name="Miki H."/>
            <person name="Mignone F."/>
            <person name="Miyake S."/>
            <person name="Morris K."/>
            <person name="Mottagui-Tabar S."/>
            <person name="Mulder N."/>
            <person name="Nakano N."/>
            <person name="Nakauchi H."/>
            <person name="Ng P."/>
            <person name="Nilsson R."/>
            <person name="Nishiguchi S."/>
            <person name="Nishikawa S."/>
            <person name="Nori F."/>
            <person name="Ohara O."/>
            <person name="Okazaki Y."/>
            <person name="Orlando V."/>
            <person name="Pang K.C."/>
            <person name="Pavan W.J."/>
            <person name="Pavesi G."/>
            <person name="Pesole G."/>
            <person name="Petrovsky N."/>
            <person name="Piazza S."/>
            <person name="Reed J."/>
            <person name="Reid J.F."/>
            <person name="Ring B.Z."/>
            <person name="Ringwald M."/>
            <person name="Rost B."/>
            <person name="Ruan Y."/>
            <person name="Salzberg S.L."/>
            <person name="Sandelin A."/>
            <person name="Schneider C."/>
            <person name="Schoenbach C."/>
            <person name="Sekiguchi K."/>
            <person name="Semple C.A."/>
            <person name="Seno S."/>
            <person name="Sessa L."/>
            <person name="Sheng Y."/>
            <person name="Shibata Y."/>
            <person name="Shimada H."/>
            <person name="Shimada K."/>
            <person name="Silva D."/>
            <person name="Sinclair B."/>
            <person name="Sperling S."/>
            <person name="Stupka E."/>
            <person name="Sugiura K."/>
            <person name="Sultana R."/>
            <person name="Takenaka Y."/>
            <person name="Taki K."/>
            <person name="Tammoja K."/>
            <person name="Tan S.L."/>
            <person name="Tang S."/>
            <person name="Taylor M.S."/>
            <person name="Tegner J."/>
            <person name="Teichmann S.A."/>
            <person name="Ueda H.R."/>
            <person name="van Nimwegen E."/>
            <person name="Verardo R."/>
            <person name="Wei C.L."/>
            <person name="Yagi K."/>
            <person name="Yamanishi H."/>
            <person name="Zabarovsky E."/>
            <person name="Zhu S."/>
            <person name="Zimmer A."/>
            <person name="Hide W."/>
            <person name="Bult C."/>
            <person name="Grimmond S.M."/>
            <person name="Teasdale R.D."/>
            <person name="Liu E.T."/>
            <person name="Brusic V."/>
            <person name="Quackenbush J."/>
            <person name="Wahlestedt C."/>
            <person name="Mattick J.S."/>
            <person name="Hume D.A."/>
            <person name="Kai C."/>
            <person name="Sasaki D."/>
            <person name="Tomaru Y."/>
            <person name="Fukuda S."/>
            <person name="Kanamori-Katayama M."/>
            <person name="Suzuki M."/>
            <person name="Aoki J."/>
            <person name="Arakawa T."/>
            <person name="Iida J."/>
            <person name="Imamura K."/>
            <person name="Itoh M."/>
            <person name="Kato T."/>
            <person name="Kawaji H."/>
            <person name="Kawagashira N."/>
            <person name="Kawashima T."/>
            <person name="Kojima M."/>
            <person name="Kondo S."/>
            <person name="Konno H."/>
            <person name="Nakano K."/>
            <person name="Ninomiya N."/>
            <person name="Nishio T."/>
            <person name="Okada M."/>
            <person name="Plessy C."/>
            <person name="Shibata K."/>
            <person name="Shiraki T."/>
            <person name="Suzuki S."/>
            <person name="Tagami M."/>
            <person name="Waki K."/>
            <person name="Watahiki A."/>
            <person name="Okamura-Oho Y."/>
            <person name="Suzuki H."/>
            <person name="Kawai J."/>
            <person name="Hayashizaki Y."/>
        </authorList>
    </citation>
    <scope>NUCLEOTIDE SEQUENCE [LARGE SCALE MRNA] OF 154-209</scope>
    <source>
        <strain>C57BL/6J</strain>
        <tissue>Embryo</tissue>
    </source>
</reference>
<reference key="4">
    <citation type="journal article" date="2010" name="Cell">
        <title>A tissue-specific atlas of mouse protein phosphorylation and expression.</title>
        <authorList>
            <person name="Huttlin E.L."/>
            <person name="Jedrychowski M.P."/>
            <person name="Elias J.E."/>
            <person name="Goswami T."/>
            <person name="Rad R."/>
            <person name="Beausoleil S.A."/>
            <person name="Villen J."/>
            <person name="Haas W."/>
            <person name="Sowa M.E."/>
            <person name="Gygi S.P."/>
        </authorList>
    </citation>
    <scope>IDENTIFICATION BY MASS SPECTROMETRY [LARGE SCALE ANALYSIS]</scope>
    <source>
        <tissue>Brain</tissue>
        <tissue>Brown adipose tissue</tissue>
        <tissue>Kidney</tissue>
        <tissue>Lung</tissue>
        <tissue>Pancreas</tissue>
        <tissue>Spleen</tissue>
        <tissue>Testis</tissue>
    </source>
</reference>
<proteinExistence type="evidence at protein level"/>
<keyword id="KW-0007">Acetylation</keyword>
<keyword id="KW-0963">Cytoplasm</keyword>
<keyword id="KW-0445">Lipid transport</keyword>
<keyword id="KW-1185">Reference proteome</keyword>
<keyword id="KW-0677">Repeat</keyword>
<keyword id="KW-0813">Transport</keyword>
<comment type="function">
    <text evidence="1">Accelerates the intermembrane transfer of various glycolipids. Catalyzes the transfer of various glycosphingolipids between membranes but does not catalyze the transfer of phospholipids. May be involved in the intracellular translocation of glucosylceramides (By similarity).</text>
</comment>
<comment type="subunit">
    <text evidence="1">Monomer.</text>
</comment>
<comment type="subcellular location">
    <subcellularLocation>
        <location evidence="1">Cytoplasm</location>
    </subcellularLocation>
</comment>
<comment type="similarity">
    <text evidence="4">Belongs to the GLTP family.</text>
</comment>
<organism>
    <name type="scientific">Mus musculus</name>
    <name type="common">Mouse</name>
    <dbReference type="NCBI Taxonomy" id="10090"/>
    <lineage>
        <taxon>Eukaryota</taxon>
        <taxon>Metazoa</taxon>
        <taxon>Chordata</taxon>
        <taxon>Craniata</taxon>
        <taxon>Vertebrata</taxon>
        <taxon>Euteleostomi</taxon>
        <taxon>Mammalia</taxon>
        <taxon>Eutheria</taxon>
        <taxon>Euarchontoglires</taxon>
        <taxon>Glires</taxon>
        <taxon>Rodentia</taxon>
        <taxon>Myomorpha</taxon>
        <taxon>Muroidea</taxon>
        <taxon>Muridae</taxon>
        <taxon>Murinae</taxon>
        <taxon>Mus</taxon>
        <taxon>Mus</taxon>
    </lineage>
</organism>
<accession>Q9JL62</accession>
<accession>Q91YJ7</accession>
<accession>Q9CTK9</accession>